<dbReference type="EC" id="2.4.2.7" evidence="1"/>
<dbReference type="EMBL" id="AP009240">
    <property type="protein sequence ID" value="BAG76018.1"/>
    <property type="molecule type" value="Genomic_DNA"/>
</dbReference>
<dbReference type="RefSeq" id="WP_000127356.1">
    <property type="nucleotide sequence ID" value="NC_011415.1"/>
</dbReference>
<dbReference type="SMR" id="B6I0C1"/>
<dbReference type="GeneID" id="93776981"/>
<dbReference type="KEGG" id="ecy:ECSE_0494"/>
<dbReference type="HOGENOM" id="CLU_063339_3_0_6"/>
<dbReference type="UniPathway" id="UPA00588">
    <property type="reaction ID" value="UER00646"/>
</dbReference>
<dbReference type="Proteomes" id="UP000008199">
    <property type="component" value="Chromosome"/>
</dbReference>
<dbReference type="GO" id="GO:0005737">
    <property type="term" value="C:cytoplasm"/>
    <property type="evidence" value="ECO:0007669"/>
    <property type="project" value="UniProtKB-SubCell"/>
</dbReference>
<dbReference type="GO" id="GO:0002055">
    <property type="term" value="F:adenine binding"/>
    <property type="evidence" value="ECO:0007669"/>
    <property type="project" value="TreeGrafter"/>
</dbReference>
<dbReference type="GO" id="GO:0003999">
    <property type="term" value="F:adenine phosphoribosyltransferase activity"/>
    <property type="evidence" value="ECO:0007669"/>
    <property type="project" value="UniProtKB-UniRule"/>
</dbReference>
<dbReference type="GO" id="GO:0016208">
    <property type="term" value="F:AMP binding"/>
    <property type="evidence" value="ECO:0007669"/>
    <property type="project" value="TreeGrafter"/>
</dbReference>
<dbReference type="GO" id="GO:0006168">
    <property type="term" value="P:adenine salvage"/>
    <property type="evidence" value="ECO:0007669"/>
    <property type="project" value="InterPro"/>
</dbReference>
<dbReference type="GO" id="GO:0044209">
    <property type="term" value="P:AMP salvage"/>
    <property type="evidence" value="ECO:0007669"/>
    <property type="project" value="UniProtKB-UniRule"/>
</dbReference>
<dbReference type="GO" id="GO:0006166">
    <property type="term" value="P:purine ribonucleoside salvage"/>
    <property type="evidence" value="ECO:0007669"/>
    <property type="project" value="UniProtKB-KW"/>
</dbReference>
<dbReference type="CDD" id="cd06223">
    <property type="entry name" value="PRTases_typeI"/>
    <property type="match status" value="1"/>
</dbReference>
<dbReference type="FunFam" id="3.40.50.2020:FF:000004">
    <property type="entry name" value="Adenine phosphoribosyltransferase"/>
    <property type="match status" value="1"/>
</dbReference>
<dbReference type="Gene3D" id="3.40.50.2020">
    <property type="match status" value="1"/>
</dbReference>
<dbReference type="HAMAP" id="MF_00004">
    <property type="entry name" value="Aden_phosphoribosyltr"/>
    <property type="match status" value="1"/>
</dbReference>
<dbReference type="InterPro" id="IPR005764">
    <property type="entry name" value="Ade_phspho_trans"/>
</dbReference>
<dbReference type="InterPro" id="IPR000836">
    <property type="entry name" value="PRibTrfase_dom"/>
</dbReference>
<dbReference type="InterPro" id="IPR029057">
    <property type="entry name" value="PRTase-like"/>
</dbReference>
<dbReference type="InterPro" id="IPR050054">
    <property type="entry name" value="UPRTase/APRTase"/>
</dbReference>
<dbReference type="NCBIfam" id="TIGR01090">
    <property type="entry name" value="apt"/>
    <property type="match status" value="1"/>
</dbReference>
<dbReference type="NCBIfam" id="NF002632">
    <property type="entry name" value="PRK02304.1-1"/>
    <property type="match status" value="1"/>
</dbReference>
<dbReference type="NCBIfam" id="NF002633">
    <property type="entry name" value="PRK02304.1-2"/>
    <property type="match status" value="1"/>
</dbReference>
<dbReference type="NCBIfam" id="NF002634">
    <property type="entry name" value="PRK02304.1-3"/>
    <property type="match status" value="1"/>
</dbReference>
<dbReference type="NCBIfam" id="NF002636">
    <property type="entry name" value="PRK02304.1-5"/>
    <property type="match status" value="1"/>
</dbReference>
<dbReference type="PANTHER" id="PTHR32315">
    <property type="entry name" value="ADENINE PHOSPHORIBOSYLTRANSFERASE"/>
    <property type="match status" value="1"/>
</dbReference>
<dbReference type="PANTHER" id="PTHR32315:SF3">
    <property type="entry name" value="ADENINE PHOSPHORIBOSYLTRANSFERASE"/>
    <property type="match status" value="1"/>
</dbReference>
<dbReference type="Pfam" id="PF00156">
    <property type="entry name" value="Pribosyltran"/>
    <property type="match status" value="1"/>
</dbReference>
<dbReference type="SUPFAM" id="SSF53271">
    <property type="entry name" value="PRTase-like"/>
    <property type="match status" value="1"/>
</dbReference>
<dbReference type="PROSITE" id="PS00103">
    <property type="entry name" value="PUR_PYR_PR_TRANSFER"/>
    <property type="match status" value="1"/>
</dbReference>
<reference key="1">
    <citation type="journal article" date="2008" name="DNA Res.">
        <title>Complete genome sequence and comparative analysis of the wild-type commensal Escherichia coli strain SE11 isolated from a healthy adult.</title>
        <authorList>
            <person name="Oshima K."/>
            <person name="Toh H."/>
            <person name="Ogura Y."/>
            <person name="Sasamoto H."/>
            <person name="Morita H."/>
            <person name="Park S.-H."/>
            <person name="Ooka T."/>
            <person name="Iyoda S."/>
            <person name="Taylor T.D."/>
            <person name="Hayashi T."/>
            <person name="Itoh K."/>
            <person name="Hattori M."/>
        </authorList>
    </citation>
    <scope>NUCLEOTIDE SEQUENCE [LARGE SCALE GENOMIC DNA]</scope>
    <source>
        <strain>SE11</strain>
    </source>
</reference>
<evidence type="ECO:0000255" key="1">
    <source>
        <dbReference type="HAMAP-Rule" id="MF_00004"/>
    </source>
</evidence>
<comment type="function">
    <text evidence="1">Catalyzes a salvage reaction resulting in the formation of AMP, that is energically less costly than de novo synthesis.</text>
</comment>
<comment type="catalytic activity">
    <reaction evidence="1">
        <text>AMP + diphosphate = 5-phospho-alpha-D-ribose 1-diphosphate + adenine</text>
        <dbReference type="Rhea" id="RHEA:16609"/>
        <dbReference type="ChEBI" id="CHEBI:16708"/>
        <dbReference type="ChEBI" id="CHEBI:33019"/>
        <dbReference type="ChEBI" id="CHEBI:58017"/>
        <dbReference type="ChEBI" id="CHEBI:456215"/>
        <dbReference type="EC" id="2.4.2.7"/>
    </reaction>
</comment>
<comment type="pathway">
    <text evidence="1">Purine metabolism; AMP biosynthesis via salvage pathway; AMP from adenine: step 1/1.</text>
</comment>
<comment type="subunit">
    <text evidence="1">Homodimer.</text>
</comment>
<comment type="subcellular location">
    <subcellularLocation>
        <location evidence="1">Cytoplasm</location>
    </subcellularLocation>
</comment>
<comment type="similarity">
    <text evidence="1">Belongs to the purine/pyrimidine phosphoribosyltransferase family.</text>
</comment>
<gene>
    <name evidence="1" type="primary">apt</name>
    <name type="ordered locus">ECSE_0494</name>
</gene>
<sequence>MTATAQQLEYLKNSIKSIQDYPKPGILFRDVTSLLEDPKAYALSIDLLVERYKNAGITKVVGTEARGFLFGAPVALGLGVGFVPVRKPGKLPRETISETYDLEYGTDQLEIHVDAIKPGDKVLVVDDLLATGGTIEATVKLIRRLGGEVADAAFIINLFDLGGEQRLEKQGITSYSLVPFPGH</sequence>
<name>APT_ECOSE</name>
<organism>
    <name type="scientific">Escherichia coli (strain SE11)</name>
    <dbReference type="NCBI Taxonomy" id="409438"/>
    <lineage>
        <taxon>Bacteria</taxon>
        <taxon>Pseudomonadati</taxon>
        <taxon>Pseudomonadota</taxon>
        <taxon>Gammaproteobacteria</taxon>
        <taxon>Enterobacterales</taxon>
        <taxon>Enterobacteriaceae</taxon>
        <taxon>Escherichia</taxon>
    </lineage>
</organism>
<accession>B6I0C1</accession>
<keyword id="KW-0963">Cytoplasm</keyword>
<keyword id="KW-0328">Glycosyltransferase</keyword>
<keyword id="KW-0660">Purine salvage</keyword>
<keyword id="KW-0808">Transferase</keyword>
<proteinExistence type="inferred from homology"/>
<feature type="chain" id="PRO_1000088970" description="Adenine phosphoribosyltransferase">
    <location>
        <begin position="1"/>
        <end position="183"/>
    </location>
</feature>
<protein>
    <recommendedName>
        <fullName evidence="1">Adenine phosphoribosyltransferase</fullName>
        <shortName evidence="1">APRT</shortName>
        <ecNumber evidence="1">2.4.2.7</ecNumber>
    </recommendedName>
</protein>